<protein>
    <recommendedName>
        <fullName evidence="1">NADH-quinone oxidoreductase subunit C</fullName>
        <ecNumber evidence="1">7.1.1.-</ecNumber>
    </recommendedName>
    <alternativeName>
        <fullName evidence="1">NADH dehydrogenase I subunit C</fullName>
    </alternativeName>
    <alternativeName>
        <fullName evidence="1">NDH-1 subunit C</fullName>
    </alternativeName>
</protein>
<sequence>MIVSTKLQDHFDKITKILSGFGVEGCISYGEITFSIRDQRDIHLILKKLKKEYLFEQLTDVTAVDYLTYGQSDWQVGKVVSQTGFSRGRQQDFKTAAVDNRFEIIYQLLSMANNVRIRVKCKLKDAQIILVDSVSDLWPSANWAEREVYDMFGIYFNNHPDLRRVLTDYGFVGHPLRKDFPQTGYVEMRYDENLGRVVYEPVEIDDRVNTPRVIRN</sequence>
<organism>
    <name type="scientific">Francisella tularensis subsp. tularensis (strain FSC 198)</name>
    <dbReference type="NCBI Taxonomy" id="393115"/>
    <lineage>
        <taxon>Bacteria</taxon>
        <taxon>Pseudomonadati</taxon>
        <taxon>Pseudomonadota</taxon>
        <taxon>Gammaproteobacteria</taxon>
        <taxon>Thiotrichales</taxon>
        <taxon>Francisellaceae</taxon>
        <taxon>Francisella</taxon>
    </lineage>
</organism>
<gene>
    <name evidence="1" type="primary">nuoC</name>
    <name type="ordered locus">FTF0033</name>
</gene>
<dbReference type="EC" id="7.1.1.-" evidence="1"/>
<dbReference type="EMBL" id="AM286280">
    <property type="protein sequence ID" value="CAL08049.1"/>
    <property type="molecule type" value="Genomic_DNA"/>
</dbReference>
<dbReference type="SMR" id="Q14K36"/>
<dbReference type="KEGG" id="ftf:FTF0033"/>
<dbReference type="HOGENOM" id="CLU_042628_2_1_6"/>
<dbReference type="GO" id="GO:0005886">
    <property type="term" value="C:plasma membrane"/>
    <property type="evidence" value="ECO:0007669"/>
    <property type="project" value="UniProtKB-SubCell"/>
</dbReference>
<dbReference type="GO" id="GO:0008137">
    <property type="term" value="F:NADH dehydrogenase (ubiquinone) activity"/>
    <property type="evidence" value="ECO:0007669"/>
    <property type="project" value="InterPro"/>
</dbReference>
<dbReference type="GO" id="GO:0050136">
    <property type="term" value="F:NADH:ubiquinone reductase (non-electrogenic) activity"/>
    <property type="evidence" value="ECO:0007669"/>
    <property type="project" value="UniProtKB-UniRule"/>
</dbReference>
<dbReference type="GO" id="GO:0048038">
    <property type="term" value="F:quinone binding"/>
    <property type="evidence" value="ECO:0007669"/>
    <property type="project" value="UniProtKB-KW"/>
</dbReference>
<dbReference type="Gene3D" id="3.30.460.80">
    <property type="entry name" value="NADH:ubiquinone oxidoreductase, 30kDa subunit"/>
    <property type="match status" value="1"/>
</dbReference>
<dbReference type="HAMAP" id="MF_01357">
    <property type="entry name" value="NDH1_NuoC"/>
    <property type="match status" value="1"/>
</dbReference>
<dbReference type="InterPro" id="IPR010218">
    <property type="entry name" value="NADH_DH_suC"/>
</dbReference>
<dbReference type="InterPro" id="IPR037232">
    <property type="entry name" value="NADH_quin_OxRdtase_su_C/D-like"/>
</dbReference>
<dbReference type="InterPro" id="IPR001268">
    <property type="entry name" value="NADH_UbQ_OxRdtase_30kDa_su"/>
</dbReference>
<dbReference type="InterPro" id="IPR020396">
    <property type="entry name" value="NADH_UbQ_OxRdtase_CS"/>
</dbReference>
<dbReference type="NCBIfam" id="TIGR01961">
    <property type="entry name" value="NuoC_fam"/>
    <property type="match status" value="1"/>
</dbReference>
<dbReference type="NCBIfam" id="NF004730">
    <property type="entry name" value="PRK06074.1-1"/>
    <property type="match status" value="1"/>
</dbReference>
<dbReference type="PANTHER" id="PTHR10884:SF14">
    <property type="entry name" value="NADH DEHYDROGENASE [UBIQUINONE] IRON-SULFUR PROTEIN 3, MITOCHONDRIAL"/>
    <property type="match status" value="1"/>
</dbReference>
<dbReference type="PANTHER" id="PTHR10884">
    <property type="entry name" value="NADH DEHYDROGENASE UBIQUINONE IRON-SULFUR PROTEIN 3"/>
    <property type="match status" value="1"/>
</dbReference>
<dbReference type="Pfam" id="PF00329">
    <property type="entry name" value="Complex1_30kDa"/>
    <property type="match status" value="1"/>
</dbReference>
<dbReference type="SUPFAM" id="SSF143243">
    <property type="entry name" value="Nqo5-like"/>
    <property type="match status" value="1"/>
</dbReference>
<dbReference type="PROSITE" id="PS00542">
    <property type="entry name" value="COMPLEX1_30K"/>
    <property type="match status" value="1"/>
</dbReference>
<comment type="function">
    <text evidence="1">NDH-1 shuttles electrons from NADH, via FMN and iron-sulfur (Fe-S) centers, to quinones in the respiratory chain. The immediate electron acceptor for the enzyme in this species is believed to be ubiquinone. Couples the redox reaction to proton translocation (for every two electrons transferred, four hydrogen ions are translocated across the cytoplasmic membrane), and thus conserves the redox energy in a proton gradient.</text>
</comment>
<comment type="catalytic activity">
    <reaction evidence="1">
        <text>a quinone + NADH + 5 H(+)(in) = a quinol + NAD(+) + 4 H(+)(out)</text>
        <dbReference type="Rhea" id="RHEA:57888"/>
        <dbReference type="ChEBI" id="CHEBI:15378"/>
        <dbReference type="ChEBI" id="CHEBI:24646"/>
        <dbReference type="ChEBI" id="CHEBI:57540"/>
        <dbReference type="ChEBI" id="CHEBI:57945"/>
        <dbReference type="ChEBI" id="CHEBI:132124"/>
    </reaction>
</comment>
<comment type="subunit">
    <text evidence="1">NDH-1 is composed of 14 different subunits. Subunits NuoB, C, D, E, F, and G constitute the peripheral sector of the complex.</text>
</comment>
<comment type="subcellular location">
    <subcellularLocation>
        <location evidence="1">Cell inner membrane</location>
        <topology evidence="1">Peripheral membrane protein</topology>
        <orientation evidence="1">Cytoplasmic side</orientation>
    </subcellularLocation>
</comment>
<comment type="similarity">
    <text evidence="1">Belongs to the complex I 30 kDa subunit family.</text>
</comment>
<reference key="1">
    <citation type="journal article" date="2007" name="PLoS ONE">
        <title>Genome sequencing shows that European isolates of Francisella tularensis subspecies tularensis are almost identical to US laboratory strain Schu S4.</title>
        <authorList>
            <person name="Chaudhuri R.R."/>
            <person name="Ren C.-P."/>
            <person name="Desmond L."/>
            <person name="Vincent G.A."/>
            <person name="Silman N.J."/>
            <person name="Brehm J.K."/>
            <person name="Elmore M.J."/>
            <person name="Hudson M.J."/>
            <person name="Forsman M."/>
            <person name="Isherwood K.E."/>
            <person name="Gurycova D."/>
            <person name="Minton N.P."/>
            <person name="Titball R.W."/>
            <person name="Pallen M.J."/>
            <person name="Vipond R."/>
        </authorList>
    </citation>
    <scope>NUCLEOTIDE SEQUENCE [LARGE SCALE GENOMIC DNA]</scope>
    <source>
        <strain>FSC 198</strain>
    </source>
</reference>
<proteinExistence type="inferred from homology"/>
<evidence type="ECO:0000255" key="1">
    <source>
        <dbReference type="HAMAP-Rule" id="MF_01357"/>
    </source>
</evidence>
<name>NUOC_FRAT1</name>
<accession>Q14K36</accession>
<feature type="chain" id="PRO_0000358102" description="NADH-quinone oxidoreductase subunit C">
    <location>
        <begin position="1"/>
        <end position="216"/>
    </location>
</feature>
<keyword id="KW-0997">Cell inner membrane</keyword>
<keyword id="KW-1003">Cell membrane</keyword>
<keyword id="KW-0472">Membrane</keyword>
<keyword id="KW-0520">NAD</keyword>
<keyword id="KW-0874">Quinone</keyword>
<keyword id="KW-1278">Translocase</keyword>
<keyword id="KW-0813">Transport</keyword>
<keyword id="KW-0830">Ubiquinone</keyword>